<dbReference type="EC" id="7.4.2.8" evidence="1"/>
<dbReference type="EMBL" id="AE008917">
    <property type="protein sequence ID" value="AAL51303.1"/>
    <property type="molecule type" value="Genomic_DNA"/>
</dbReference>
<dbReference type="PIR" id="AD3267">
    <property type="entry name" value="AD3267"/>
</dbReference>
<dbReference type="RefSeq" id="WP_004686711.1">
    <property type="nucleotide sequence ID" value="NZ_GG703778.1"/>
</dbReference>
<dbReference type="SMR" id="Q8YJG2"/>
<dbReference type="GeneID" id="29593406"/>
<dbReference type="KEGG" id="bme:BMEI0121"/>
<dbReference type="KEGG" id="bmel:DK63_1312"/>
<dbReference type="PATRIC" id="fig|224914.52.peg.1386"/>
<dbReference type="eggNOG" id="COG0653">
    <property type="taxonomic scope" value="Bacteria"/>
</dbReference>
<dbReference type="PhylomeDB" id="Q8YJG2"/>
<dbReference type="Proteomes" id="UP000000419">
    <property type="component" value="Chromosome I"/>
</dbReference>
<dbReference type="GO" id="GO:0031522">
    <property type="term" value="C:cell envelope Sec protein transport complex"/>
    <property type="evidence" value="ECO:0007669"/>
    <property type="project" value="TreeGrafter"/>
</dbReference>
<dbReference type="GO" id="GO:0005829">
    <property type="term" value="C:cytosol"/>
    <property type="evidence" value="ECO:0007669"/>
    <property type="project" value="TreeGrafter"/>
</dbReference>
<dbReference type="GO" id="GO:0005886">
    <property type="term" value="C:plasma membrane"/>
    <property type="evidence" value="ECO:0007669"/>
    <property type="project" value="UniProtKB-SubCell"/>
</dbReference>
<dbReference type="GO" id="GO:0005524">
    <property type="term" value="F:ATP binding"/>
    <property type="evidence" value="ECO:0007669"/>
    <property type="project" value="UniProtKB-UniRule"/>
</dbReference>
<dbReference type="GO" id="GO:0046872">
    <property type="term" value="F:metal ion binding"/>
    <property type="evidence" value="ECO:0007669"/>
    <property type="project" value="UniProtKB-KW"/>
</dbReference>
<dbReference type="GO" id="GO:0008564">
    <property type="term" value="F:protein-exporting ATPase activity"/>
    <property type="evidence" value="ECO:0007669"/>
    <property type="project" value="UniProtKB-EC"/>
</dbReference>
<dbReference type="GO" id="GO:0065002">
    <property type="term" value="P:intracellular protein transmembrane transport"/>
    <property type="evidence" value="ECO:0007669"/>
    <property type="project" value="UniProtKB-UniRule"/>
</dbReference>
<dbReference type="GO" id="GO:0017038">
    <property type="term" value="P:protein import"/>
    <property type="evidence" value="ECO:0007669"/>
    <property type="project" value="InterPro"/>
</dbReference>
<dbReference type="GO" id="GO:0006605">
    <property type="term" value="P:protein targeting"/>
    <property type="evidence" value="ECO:0007669"/>
    <property type="project" value="UniProtKB-UniRule"/>
</dbReference>
<dbReference type="GO" id="GO:0043952">
    <property type="term" value="P:protein transport by the Sec complex"/>
    <property type="evidence" value="ECO:0007669"/>
    <property type="project" value="TreeGrafter"/>
</dbReference>
<dbReference type="CDD" id="cd17928">
    <property type="entry name" value="DEXDc_SecA"/>
    <property type="match status" value="1"/>
</dbReference>
<dbReference type="CDD" id="cd18803">
    <property type="entry name" value="SF2_C_secA"/>
    <property type="match status" value="1"/>
</dbReference>
<dbReference type="FunFam" id="3.90.1440.10:FF:000001">
    <property type="entry name" value="Preprotein translocase subunit SecA"/>
    <property type="match status" value="1"/>
</dbReference>
<dbReference type="FunFam" id="1.10.3060.10:FF:000003">
    <property type="entry name" value="Protein translocase subunit SecA"/>
    <property type="match status" value="1"/>
</dbReference>
<dbReference type="FunFam" id="3.40.50.300:FF:000334">
    <property type="entry name" value="Protein translocase subunit SecA"/>
    <property type="match status" value="1"/>
</dbReference>
<dbReference type="FunFam" id="3.40.50.300:FF:001790">
    <property type="entry name" value="Protein translocase subunit SecA"/>
    <property type="match status" value="1"/>
</dbReference>
<dbReference type="Gene3D" id="3.10.450.50">
    <property type="match status" value="1"/>
</dbReference>
<dbReference type="Gene3D" id="1.10.3060.10">
    <property type="entry name" value="Helical scaffold and wing domains of SecA"/>
    <property type="match status" value="1"/>
</dbReference>
<dbReference type="Gene3D" id="3.40.50.300">
    <property type="entry name" value="P-loop containing nucleotide triphosphate hydrolases"/>
    <property type="match status" value="2"/>
</dbReference>
<dbReference type="Gene3D" id="3.90.1440.10">
    <property type="entry name" value="SecA, preprotein cross-linking domain"/>
    <property type="match status" value="1"/>
</dbReference>
<dbReference type="HAMAP" id="MF_01382">
    <property type="entry name" value="SecA"/>
    <property type="match status" value="1"/>
</dbReference>
<dbReference type="InterPro" id="IPR014001">
    <property type="entry name" value="Helicase_ATP-bd"/>
</dbReference>
<dbReference type="InterPro" id="IPR001650">
    <property type="entry name" value="Helicase_C-like"/>
</dbReference>
<dbReference type="InterPro" id="IPR027417">
    <property type="entry name" value="P-loop_NTPase"/>
</dbReference>
<dbReference type="InterPro" id="IPR004027">
    <property type="entry name" value="SEC_C_motif"/>
</dbReference>
<dbReference type="InterPro" id="IPR000185">
    <property type="entry name" value="SecA"/>
</dbReference>
<dbReference type="InterPro" id="IPR020937">
    <property type="entry name" value="SecA_CS"/>
</dbReference>
<dbReference type="InterPro" id="IPR011115">
    <property type="entry name" value="SecA_DEAD"/>
</dbReference>
<dbReference type="InterPro" id="IPR014018">
    <property type="entry name" value="SecA_motor_DEAD"/>
</dbReference>
<dbReference type="InterPro" id="IPR011130">
    <property type="entry name" value="SecA_preprotein_X-link_dom"/>
</dbReference>
<dbReference type="InterPro" id="IPR044722">
    <property type="entry name" value="SecA_SF2_C"/>
</dbReference>
<dbReference type="InterPro" id="IPR011116">
    <property type="entry name" value="SecA_Wing/Scaffold"/>
</dbReference>
<dbReference type="InterPro" id="IPR036266">
    <property type="entry name" value="SecA_Wing/Scaffold_sf"/>
</dbReference>
<dbReference type="InterPro" id="IPR036670">
    <property type="entry name" value="SecA_X-link_sf"/>
</dbReference>
<dbReference type="NCBIfam" id="NF009538">
    <property type="entry name" value="PRK12904.1"/>
    <property type="match status" value="1"/>
</dbReference>
<dbReference type="NCBIfam" id="TIGR00963">
    <property type="entry name" value="secA"/>
    <property type="match status" value="1"/>
</dbReference>
<dbReference type="PANTHER" id="PTHR30612:SF0">
    <property type="entry name" value="CHLOROPLAST PROTEIN-TRANSPORTING ATPASE"/>
    <property type="match status" value="1"/>
</dbReference>
<dbReference type="PANTHER" id="PTHR30612">
    <property type="entry name" value="SECA INNER MEMBRANE COMPONENT OF SEC PROTEIN SECRETION SYSTEM"/>
    <property type="match status" value="1"/>
</dbReference>
<dbReference type="Pfam" id="PF21090">
    <property type="entry name" value="P-loop_SecA"/>
    <property type="match status" value="1"/>
</dbReference>
<dbReference type="Pfam" id="PF02810">
    <property type="entry name" value="SEC-C"/>
    <property type="match status" value="1"/>
</dbReference>
<dbReference type="Pfam" id="PF07517">
    <property type="entry name" value="SecA_DEAD"/>
    <property type="match status" value="1"/>
</dbReference>
<dbReference type="Pfam" id="PF01043">
    <property type="entry name" value="SecA_PP_bind"/>
    <property type="match status" value="1"/>
</dbReference>
<dbReference type="Pfam" id="PF07516">
    <property type="entry name" value="SecA_SW"/>
    <property type="match status" value="1"/>
</dbReference>
<dbReference type="PRINTS" id="PR00906">
    <property type="entry name" value="SECA"/>
</dbReference>
<dbReference type="SMART" id="SM00957">
    <property type="entry name" value="SecA_DEAD"/>
    <property type="match status" value="1"/>
</dbReference>
<dbReference type="SMART" id="SM00958">
    <property type="entry name" value="SecA_PP_bind"/>
    <property type="match status" value="1"/>
</dbReference>
<dbReference type="SUPFAM" id="SSF81886">
    <property type="entry name" value="Helical scaffold and wing domains of SecA"/>
    <property type="match status" value="1"/>
</dbReference>
<dbReference type="SUPFAM" id="SSF52540">
    <property type="entry name" value="P-loop containing nucleoside triphosphate hydrolases"/>
    <property type="match status" value="2"/>
</dbReference>
<dbReference type="SUPFAM" id="SSF81767">
    <property type="entry name" value="Pre-protein crosslinking domain of SecA"/>
    <property type="match status" value="1"/>
</dbReference>
<dbReference type="PROSITE" id="PS01312">
    <property type="entry name" value="SECA"/>
    <property type="match status" value="1"/>
</dbReference>
<dbReference type="PROSITE" id="PS51196">
    <property type="entry name" value="SECA_MOTOR_DEAD"/>
    <property type="match status" value="1"/>
</dbReference>
<keyword id="KW-0067">ATP-binding</keyword>
<keyword id="KW-0997">Cell inner membrane</keyword>
<keyword id="KW-1003">Cell membrane</keyword>
<keyword id="KW-0963">Cytoplasm</keyword>
<keyword id="KW-0472">Membrane</keyword>
<keyword id="KW-0479">Metal-binding</keyword>
<keyword id="KW-0547">Nucleotide-binding</keyword>
<keyword id="KW-0653">Protein transport</keyword>
<keyword id="KW-1278">Translocase</keyword>
<keyword id="KW-0811">Translocation</keyword>
<keyword id="KW-0813">Transport</keyword>
<keyword id="KW-0862">Zinc</keyword>
<sequence length="906" mass="102841">MVSFGGLARKIFGSSNDRRVKTLRQRAEQITALEKNYENLTDEQLQAKTAEFRAALAEGKSLDSLLPDAFATAREAAKRVLGMRPFDVQLIGGMVLHERGIAEMRTGEGKTLMATLPVYLNALEGKGVHVVTVNDYLATRDAETMGRLYNFLGLTVGVIKHGLDDDERRAAYACDITYGTNNELGFDYLRDNMKYERAQMVQRPHNYAIVDEVDSILIDEARTPLIISGPLEDRSDFYNLIDTFIPPLAEEDYEVDEKQKTAIFTEVGTEKVEKLLEAAGHLKGESLYDIENVAVVHHLNNALRAHKLFQRDKDYIVRNDEIVIIDEFTGRMMPGRRYSEGLHQALEAKEHVTIQPENQTLASITFQNYFRMYNKLSGMTGTAATEAEEFGNIYGLEVLEIPTNLPVQRIDEDDEVYRTVEEKYRAIVRDIRASHEKGQPILVGTTSIEKSEQLAERLRREGIKGFQVLNARYHEQEAYIIAQAGVPGAVTIATNMAGRGTDIQLGGNLEMRVRQELSDVPEGPEREEKIAAIKADIAQLKEKALAAGGLYVLATERHESRRIDNQLRGRSGRQGDPGRSKFFLSLQDDLMRIFGSDRMDGMLQKLGLKEDEAIVHPWINKALEKAQKKVEARNFEIRKNLLKYDDVMNDQRKVIFEQRLEMMDEEDLTETVAEMRHEVIEDMVILRIPKDAYAEKWDIAGLKQDIASKLNLDLPVEEWAKEEGIAEEEFENRIKEAADKAAAEKAERFGPQIMTYVEKSVIMQSLDNLWREHLVNLDHLRSVVGFRGYAQRDPLNEYKTEAFELFQTMLANLREVVISQLMRVEIVREAPPEPQLPPMAGLHIDGATGENDFDEAIWAEHQHDDRIVPPAQRDPADPRTWGKVSRNEPCPCGSGKKYKHCHGAFE</sequence>
<protein>
    <recommendedName>
        <fullName evidence="1">Protein translocase subunit SecA</fullName>
        <ecNumber evidence="1">7.4.2.8</ecNumber>
    </recommendedName>
</protein>
<feature type="chain" id="PRO_1000073465" description="Protein translocase subunit SecA">
    <location>
        <begin position="1"/>
        <end position="906"/>
    </location>
</feature>
<feature type="region of interest" description="Disordered" evidence="2">
    <location>
        <begin position="868"/>
        <end position="887"/>
    </location>
</feature>
<feature type="binding site" evidence="1">
    <location>
        <position position="89"/>
    </location>
    <ligand>
        <name>ATP</name>
        <dbReference type="ChEBI" id="CHEBI:30616"/>
    </ligand>
</feature>
<feature type="binding site" evidence="1">
    <location>
        <begin position="107"/>
        <end position="111"/>
    </location>
    <ligand>
        <name>ATP</name>
        <dbReference type="ChEBI" id="CHEBI:30616"/>
    </ligand>
</feature>
<feature type="binding site" evidence="1">
    <location>
        <position position="502"/>
    </location>
    <ligand>
        <name>ATP</name>
        <dbReference type="ChEBI" id="CHEBI:30616"/>
    </ligand>
</feature>
<feature type="binding site" evidence="1">
    <location>
        <position position="890"/>
    </location>
    <ligand>
        <name>Zn(2+)</name>
        <dbReference type="ChEBI" id="CHEBI:29105"/>
    </ligand>
</feature>
<feature type="binding site" evidence="1">
    <location>
        <position position="892"/>
    </location>
    <ligand>
        <name>Zn(2+)</name>
        <dbReference type="ChEBI" id="CHEBI:29105"/>
    </ligand>
</feature>
<feature type="binding site" evidence="1">
    <location>
        <position position="901"/>
    </location>
    <ligand>
        <name>Zn(2+)</name>
        <dbReference type="ChEBI" id="CHEBI:29105"/>
    </ligand>
</feature>
<feature type="binding site" evidence="1">
    <location>
        <position position="902"/>
    </location>
    <ligand>
        <name>Zn(2+)</name>
        <dbReference type="ChEBI" id="CHEBI:29105"/>
    </ligand>
</feature>
<gene>
    <name evidence="1" type="primary">secA</name>
    <name type="ordered locus">BMEI0121</name>
</gene>
<proteinExistence type="inferred from homology"/>
<reference key="1">
    <citation type="journal article" date="2002" name="Proc. Natl. Acad. Sci. U.S.A.">
        <title>The genome sequence of the facultative intracellular pathogen Brucella melitensis.</title>
        <authorList>
            <person name="DelVecchio V.G."/>
            <person name="Kapatral V."/>
            <person name="Redkar R.J."/>
            <person name="Patra G."/>
            <person name="Mujer C."/>
            <person name="Los T."/>
            <person name="Ivanova N."/>
            <person name="Anderson I."/>
            <person name="Bhattacharyya A."/>
            <person name="Lykidis A."/>
            <person name="Reznik G."/>
            <person name="Jablonski L."/>
            <person name="Larsen N."/>
            <person name="D'Souza M."/>
            <person name="Bernal A."/>
            <person name="Mazur M."/>
            <person name="Goltsman E."/>
            <person name="Selkov E."/>
            <person name="Elzer P.H."/>
            <person name="Hagius S."/>
            <person name="O'Callaghan D."/>
            <person name="Letesson J.-J."/>
            <person name="Haselkorn R."/>
            <person name="Kyrpides N.C."/>
            <person name="Overbeek R."/>
        </authorList>
    </citation>
    <scope>NUCLEOTIDE SEQUENCE [LARGE SCALE GENOMIC DNA]</scope>
    <source>
        <strain>ATCC 23456 / CCUG 17765 / NCTC 10094 / 16M</strain>
    </source>
</reference>
<evidence type="ECO:0000255" key="1">
    <source>
        <dbReference type="HAMAP-Rule" id="MF_01382"/>
    </source>
</evidence>
<evidence type="ECO:0000256" key="2">
    <source>
        <dbReference type="SAM" id="MobiDB-lite"/>
    </source>
</evidence>
<comment type="function">
    <text evidence="1">Part of the Sec protein translocase complex. Interacts with the SecYEG preprotein conducting channel. Has a central role in coupling the hydrolysis of ATP to the transfer of proteins into and across the cell membrane, serving both as a receptor for the preprotein-SecB complex and as an ATP-driven molecular motor driving the stepwise translocation of polypeptide chains across the membrane.</text>
</comment>
<comment type="catalytic activity">
    <reaction evidence="1">
        <text>ATP + H2O + cellular proteinSide 1 = ADP + phosphate + cellular proteinSide 2.</text>
        <dbReference type="EC" id="7.4.2.8"/>
    </reaction>
</comment>
<comment type="cofactor">
    <cofactor evidence="1">
        <name>Zn(2+)</name>
        <dbReference type="ChEBI" id="CHEBI:29105"/>
    </cofactor>
    <text evidence="1">May bind 1 zinc ion per subunit.</text>
</comment>
<comment type="subunit">
    <text evidence="1">Monomer and homodimer. Part of the essential Sec protein translocation apparatus which comprises SecA, SecYEG and auxiliary proteins SecDF-YajC and YidC.</text>
</comment>
<comment type="subcellular location">
    <subcellularLocation>
        <location evidence="1">Cell inner membrane</location>
        <topology evidence="1">Peripheral membrane protein</topology>
        <orientation evidence="1">Cytoplasmic side</orientation>
    </subcellularLocation>
    <subcellularLocation>
        <location evidence="1">Cytoplasm</location>
    </subcellularLocation>
    <text evidence="1">Distribution is 50-50.</text>
</comment>
<comment type="similarity">
    <text evidence="1">Belongs to the SecA family.</text>
</comment>
<organism>
    <name type="scientific">Brucella melitensis biotype 1 (strain ATCC 23456 / CCUG 17765 / NCTC 10094 / 16M)</name>
    <dbReference type="NCBI Taxonomy" id="224914"/>
    <lineage>
        <taxon>Bacteria</taxon>
        <taxon>Pseudomonadati</taxon>
        <taxon>Pseudomonadota</taxon>
        <taxon>Alphaproteobacteria</taxon>
        <taxon>Hyphomicrobiales</taxon>
        <taxon>Brucellaceae</taxon>
        <taxon>Brucella/Ochrobactrum group</taxon>
        <taxon>Brucella</taxon>
    </lineage>
</organism>
<accession>Q8YJG2</accession>
<name>SECA_BRUME</name>